<organism>
    <name type="scientific">Armoracia rusticana</name>
    <name type="common">Horseradish</name>
    <name type="synonym">Armoracia laphatifolia</name>
    <dbReference type="NCBI Taxonomy" id="3704"/>
    <lineage>
        <taxon>Eukaryota</taxon>
        <taxon>Viridiplantae</taxon>
        <taxon>Streptophyta</taxon>
        <taxon>Embryophyta</taxon>
        <taxon>Tracheophyta</taxon>
        <taxon>Spermatophyta</taxon>
        <taxon>Magnoliopsida</taxon>
        <taxon>eudicotyledons</taxon>
        <taxon>Gunneridae</taxon>
        <taxon>Pentapetalae</taxon>
        <taxon>rosids</taxon>
        <taxon>malvids</taxon>
        <taxon>Brassicales</taxon>
        <taxon>Brassicaceae</taxon>
        <taxon>Cardamineae</taxon>
        <taxon>Armoracia</taxon>
    </lineage>
</organism>
<name>PER1A_ARMRU</name>
<evidence type="ECO:0000255" key="1">
    <source>
        <dbReference type="PROSITE-ProRule" id="PRU00297"/>
    </source>
</evidence>
<evidence type="ECO:0000269" key="2">
    <source>
    </source>
</evidence>
<evidence type="ECO:0000305" key="3"/>
<evidence type="ECO:0007829" key="4">
    <source>
        <dbReference type="PDB" id="1GWU"/>
    </source>
</evidence>
<evidence type="ECO:0007829" key="5">
    <source>
        <dbReference type="PDB" id="1H5F"/>
    </source>
</evidence>
<sequence length="353" mass="38825">MHFSSSSTLFTCITLIPLVCLILHASLSDAQLTPTFYDNSCPNVSNIVRDTIVNELRSDPRIAASILRLHFHDCFVNGCDASILLDNTTSFRTEKDAFGNANSARGFPVIDRMKAAVESACPRTVSCADLLTIAAQQSVTLAGGPSWRVPLGRRDSLQAFLDLANANLPAPFFTLPQLKDSFRNVGLNRSSDLVALSGGHTFGKNQCRFIMDRLYNFSNTGLPDPTLNTTYLQTLRGLCPLNGNLSALVDFDLRTPTIFDNKYYVNLEEQKGLIQSDQELFSSPNATDTIPLVRSFANSTQTFFNAFVEAMDRMGNITPLTGTQGQIRLNCRVVNSNSLLHDMVEVVDFVSSM</sequence>
<protein>
    <recommendedName>
        <fullName>Peroxidase C1A</fullName>
        <ecNumber>1.11.1.7</ecNumber>
    </recommendedName>
</protein>
<gene>
    <name type="primary">PRXC1A</name>
    <name type="synonym">HPRC1</name>
</gene>
<comment type="function">
    <text>Removal of H(2)O(2), oxidation of toxic reductants, biosynthesis and degradation of lignin, suberization, auxin catabolism, response to environmental stresses such as wounding, pathogen attack and oxidative stress. These functions might be dependent on each isozyme/isoform in each plant tissue.</text>
</comment>
<comment type="catalytic activity">
    <reaction>
        <text>2 a phenolic donor + H2O2 = 2 a phenolic radical donor + 2 H2O</text>
        <dbReference type="Rhea" id="RHEA:56136"/>
        <dbReference type="ChEBI" id="CHEBI:15377"/>
        <dbReference type="ChEBI" id="CHEBI:16240"/>
        <dbReference type="ChEBI" id="CHEBI:139520"/>
        <dbReference type="ChEBI" id="CHEBI:139521"/>
        <dbReference type="EC" id="1.11.1.7"/>
    </reaction>
</comment>
<comment type="cofactor">
    <cofactor>
        <name>Ca(2+)</name>
        <dbReference type="ChEBI" id="CHEBI:29108"/>
    </cofactor>
    <text>Binds 2 calcium ions per subunit.</text>
</comment>
<comment type="cofactor">
    <cofactor>
        <name>heme b</name>
        <dbReference type="ChEBI" id="CHEBI:60344"/>
    </cofactor>
    <text>Binds 1 heme b (iron(II)-protoporphyrin IX) group per subunit.</text>
</comment>
<comment type="subunit">
    <text>Monomer.</text>
</comment>
<comment type="subcellular location">
    <subcellularLocation>
        <location evidence="3">Secreted</location>
    </subcellularLocation>
    <subcellularLocation>
        <location evidence="3">Vacuole</location>
    </subcellularLocation>
    <text>Carboxy-terminal extension appears to target the protein to vacuoles.</text>
</comment>
<comment type="similarity">
    <text evidence="1">Belongs to the peroxidase family. Classical plant (class III) peroxidase subfamily.</text>
</comment>
<keyword id="KW-0002">3D-structure</keyword>
<keyword id="KW-0106">Calcium</keyword>
<keyword id="KW-0903">Direct protein sequencing</keyword>
<keyword id="KW-1015">Disulfide bond</keyword>
<keyword id="KW-0325">Glycoprotein</keyword>
<keyword id="KW-0349">Heme</keyword>
<keyword id="KW-0376">Hydrogen peroxide</keyword>
<keyword id="KW-0408">Iron</keyword>
<keyword id="KW-0479">Metal-binding</keyword>
<keyword id="KW-0560">Oxidoreductase</keyword>
<keyword id="KW-0575">Peroxidase</keyword>
<keyword id="KW-0873">Pyrrolidone carboxylic acid</keyword>
<keyword id="KW-0964">Secreted</keyword>
<keyword id="KW-0732">Signal</keyword>
<keyword id="KW-0926">Vacuole</keyword>
<proteinExistence type="evidence at protein level"/>
<dbReference type="EC" id="1.11.1.7"/>
<dbReference type="EMBL" id="M37156">
    <property type="protein sequence ID" value="AAA33377.1"/>
    <property type="molecule type" value="Genomic_DNA"/>
</dbReference>
<dbReference type="PIR" id="S00625">
    <property type="entry name" value="OPRHC"/>
</dbReference>
<dbReference type="PDB" id="1ATJ">
    <property type="method" value="X-ray"/>
    <property type="resolution" value="2.15 A"/>
    <property type="chains" value="A/B/C/D/E/F=31-336"/>
</dbReference>
<dbReference type="PDB" id="1GW2">
    <property type="method" value="X-ray"/>
    <property type="resolution" value="2.15 A"/>
    <property type="chains" value="A=31-338"/>
</dbReference>
<dbReference type="PDB" id="1GWO">
    <property type="method" value="X-ray"/>
    <property type="resolution" value="2.07 A"/>
    <property type="chains" value="A=31-338"/>
</dbReference>
<dbReference type="PDB" id="1GWT">
    <property type="method" value="X-ray"/>
    <property type="resolution" value="1.70 A"/>
    <property type="chains" value="A=31-338"/>
</dbReference>
<dbReference type="PDB" id="1GWU">
    <property type="method" value="X-ray"/>
    <property type="resolution" value="1.31 A"/>
    <property type="chains" value="A=31-338"/>
</dbReference>
<dbReference type="PDB" id="1GX2">
    <property type="method" value="X-ray"/>
    <property type="resolution" value="2.20 A"/>
    <property type="chains" value="A/B=31-338"/>
</dbReference>
<dbReference type="PDB" id="1H55">
    <property type="method" value="X-ray"/>
    <property type="resolution" value="1.61 A"/>
    <property type="chains" value="A=31-338"/>
</dbReference>
<dbReference type="PDB" id="1H57">
    <property type="method" value="X-ray"/>
    <property type="resolution" value="1.60 A"/>
    <property type="chains" value="A=31-338"/>
</dbReference>
<dbReference type="PDB" id="1H58">
    <property type="method" value="X-ray"/>
    <property type="resolution" value="1.70 A"/>
    <property type="chains" value="A=31-338"/>
</dbReference>
<dbReference type="PDB" id="1H5A">
    <property type="method" value="X-ray"/>
    <property type="resolution" value="1.60 A"/>
    <property type="chains" value="A=31-338"/>
</dbReference>
<dbReference type="PDB" id="1H5C">
    <property type="method" value="X-ray"/>
    <property type="resolution" value="1.62 A"/>
    <property type="chains" value="A=31-338"/>
</dbReference>
<dbReference type="PDB" id="1H5D">
    <property type="method" value="X-ray"/>
    <property type="resolution" value="1.60 A"/>
    <property type="chains" value="A=31-338"/>
</dbReference>
<dbReference type="PDB" id="1H5E">
    <property type="method" value="X-ray"/>
    <property type="resolution" value="1.60 A"/>
    <property type="chains" value="A=31-338"/>
</dbReference>
<dbReference type="PDB" id="1H5F">
    <property type="method" value="X-ray"/>
    <property type="resolution" value="1.60 A"/>
    <property type="chains" value="A=31-338"/>
</dbReference>
<dbReference type="PDB" id="1H5G">
    <property type="method" value="X-ray"/>
    <property type="resolution" value="1.57 A"/>
    <property type="chains" value="A=31-338"/>
</dbReference>
<dbReference type="PDB" id="1H5H">
    <property type="method" value="X-ray"/>
    <property type="resolution" value="1.60 A"/>
    <property type="chains" value="A=31-338"/>
</dbReference>
<dbReference type="PDB" id="1H5I">
    <property type="method" value="X-ray"/>
    <property type="resolution" value="1.60 A"/>
    <property type="chains" value="A=31-338"/>
</dbReference>
<dbReference type="PDB" id="1H5J">
    <property type="method" value="X-ray"/>
    <property type="resolution" value="1.60 A"/>
    <property type="chains" value="A=31-338"/>
</dbReference>
<dbReference type="PDB" id="1H5K">
    <property type="method" value="X-ray"/>
    <property type="resolution" value="1.60 A"/>
    <property type="chains" value="A=31-338"/>
</dbReference>
<dbReference type="PDB" id="1H5L">
    <property type="method" value="X-ray"/>
    <property type="resolution" value="1.60 A"/>
    <property type="chains" value="A=31-338"/>
</dbReference>
<dbReference type="PDB" id="1H5M">
    <property type="method" value="X-ray"/>
    <property type="resolution" value="1.57 A"/>
    <property type="chains" value="A=31-338"/>
</dbReference>
<dbReference type="PDB" id="1HCH">
    <property type="method" value="X-ray"/>
    <property type="resolution" value="1.57 A"/>
    <property type="chains" value="A=31-336"/>
</dbReference>
<dbReference type="PDB" id="1KZM">
    <property type="method" value="X-ray"/>
    <property type="resolution" value="2.00 A"/>
    <property type="chains" value="A=31-338"/>
</dbReference>
<dbReference type="PDB" id="1W4W">
    <property type="method" value="X-ray"/>
    <property type="resolution" value="1.55 A"/>
    <property type="chains" value="A=31-353"/>
</dbReference>
<dbReference type="PDB" id="1W4Y">
    <property type="method" value="X-ray"/>
    <property type="resolution" value="1.60 A"/>
    <property type="chains" value="A=31-353"/>
</dbReference>
<dbReference type="PDB" id="2ATJ">
    <property type="method" value="X-ray"/>
    <property type="resolution" value="2.00 A"/>
    <property type="chains" value="A/B=31-337"/>
</dbReference>
<dbReference type="PDB" id="2YLJ">
    <property type="method" value="X-ray"/>
    <property type="resolution" value="1.69 A"/>
    <property type="chains" value="A=31-336"/>
</dbReference>
<dbReference type="PDB" id="3ATJ">
    <property type="method" value="X-ray"/>
    <property type="resolution" value="2.20 A"/>
    <property type="chains" value="A/B=31-338"/>
</dbReference>
<dbReference type="PDB" id="4ATJ">
    <property type="method" value="X-ray"/>
    <property type="resolution" value="2.50 A"/>
    <property type="chains" value="A/B=31-338"/>
</dbReference>
<dbReference type="PDB" id="6ATJ">
    <property type="method" value="X-ray"/>
    <property type="resolution" value="2.00 A"/>
    <property type="chains" value="A=31-338"/>
</dbReference>
<dbReference type="PDB" id="7ATJ">
    <property type="method" value="X-ray"/>
    <property type="resolution" value="1.47 A"/>
    <property type="chains" value="A=31-338"/>
</dbReference>
<dbReference type="PDBsum" id="1ATJ"/>
<dbReference type="PDBsum" id="1GW2"/>
<dbReference type="PDBsum" id="1GWO"/>
<dbReference type="PDBsum" id="1GWT"/>
<dbReference type="PDBsum" id="1GWU"/>
<dbReference type="PDBsum" id="1GX2"/>
<dbReference type="PDBsum" id="1H55"/>
<dbReference type="PDBsum" id="1H57"/>
<dbReference type="PDBsum" id="1H58"/>
<dbReference type="PDBsum" id="1H5A"/>
<dbReference type="PDBsum" id="1H5C"/>
<dbReference type="PDBsum" id="1H5D"/>
<dbReference type="PDBsum" id="1H5E"/>
<dbReference type="PDBsum" id="1H5F"/>
<dbReference type="PDBsum" id="1H5G"/>
<dbReference type="PDBsum" id="1H5H"/>
<dbReference type="PDBsum" id="1H5I"/>
<dbReference type="PDBsum" id="1H5J"/>
<dbReference type="PDBsum" id="1H5K"/>
<dbReference type="PDBsum" id="1H5L"/>
<dbReference type="PDBsum" id="1H5M"/>
<dbReference type="PDBsum" id="1HCH"/>
<dbReference type="PDBsum" id="1KZM"/>
<dbReference type="PDBsum" id="1W4W"/>
<dbReference type="PDBsum" id="1W4Y"/>
<dbReference type="PDBsum" id="2ATJ"/>
<dbReference type="PDBsum" id="2YLJ"/>
<dbReference type="PDBsum" id="3ATJ"/>
<dbReference type="PDBsum" id="4ATJ"/>
<dbReference type="PDBsum" id="6ATJ"/>
<dbReference type="PDBsum" id="7ATJ"/>
<dbReference type="PCDDB" id="P00433"/>
<dbReference type="SMR" id="P00433"/>
<dbReference type="ChEMBL" id="CHEMBL5169106"/>
<dbReference type="PeroxiBase" id="90">
    <property type="entry name" value="AruPrx01-1"/>
</dbReference>
<dbReference type="GlyConnect" id="491">
    <property type="glycosylation" value="7 N-Linked glycans"/>
</dbReference>
<dbReference type="GlyCosmos" id="P00433">
    <property type="glycosylation" value="8 sites, 10 glycans"/>
</dbReference>
<dbReference type="iPTMnet" id="P00433"/>
<dbReference type="CPTAC" id="CPTAC-1477"/>
<dbReference type="BRENDA" id="1.11.1.7">
    <property type="organism ID" value="429"/>
</dbReference>
<dbReference type="SABIO-RK" id="P00433"/>
<dbReference type="EvolutionaryTrace" id="P00433"/>
<dbReference type="GO" id="GO:0005576">
    <property type="term" value="C:extracellular region"/>
    <property type="evidence" value="ECO:0007669"/>
    <property type="project" value="UniProtKB-SubCell"/>
</dbReference>
<dbReference type="GO" id="GO:0005773">
    <property type="term" value="C:vacuole"/>
    <property type="evidence" value="ECO:0007669"/>
    <property type="project" value="UniProtKB-SubCell"/>
</dbReference>
<dbReference type="GO" id="GO:0020037">
    <property type="term" value="F:heme binding"/>
    <property type="evidence" value="ECO:0007669"/>
    <property type="project" value="InterPro"/>
</dbReference>
<dbReference type="GO" id="GO:0140825">
    <property type="term" value="F:lactoperoxidase activity"/>
    <property type="evidence" value="ECO:0007669"/>
    <property type="project" value="UniProtKB-EC"/>
</dbReference>
<dbReference type="GO" id="GO:0046872">
    <property type="term" value="F:metal ion binding"/>
    <property type="evidence" value="ECO:0007669"/>
    <property type="project" value="UniProtKB-KW"/>
</dbReference>
<dbReference type="GO" id="GO:0042744">
    <property type="term" value="P:hydrogen peroxide catabolic process"/>
    <property type="evidence" value="ECO:0007669"/>
    <property type="project" value="UniProtKB-KW"/>
</dbReference>
<dbReference type="GO" id="GO:0006979">
    <property type="term" value="P:response to oxidative stress"/>
    <property type="evidence" value="ECO:0007669"/>
    <property type="project" value="InterPro"/>
</dbReference>
<dbReference type="CDD" id="cd00693">
    <property type="entry name" value="secretory_peroxidase"/>
    <property type="match status" value="1"/>
</dbReference>
<dbReference type="FunFam" id="1.10.420.10:FF:000001">
    <property type="entry name" value="Peroxidase"/>
    <property type="match status" value="1"/>
</dbReference>
<dbReference type="FunFam" id="1.10.520.10:FF:000001">
    <property type="entry name" value="Peroxidase"/>
    <property type="match status" value="1"/>
</dbReference>
<dbReference type="Gene3D" id="1.10.520.10">
    <property type="match status" value="1"/>
</dbReference>
<dbReference type="Gene3D" id="1.10.420.10">
    <property type="entry name" value="Peroxidase, domain 2"/>
    <property type="match status" value="1"/>
</dbReference>
<dbReference type="InterPro" id="IPR002016">
    <property type="entry name" value="Haem_peroxidase"/>
</dbReference>
<dbReference type="InterPro" id="IPR010255">
    <property type="entry name" value="Haem_peroxidase_sf"/>
</dbReference>
<dbReference type="InterPro" id="IPR000823">
    <property type="entry name" value="Peroxidase_pln"/>
</dbReference>
<dbReference type="InterPro" id="IPR019794">
    <property type="entry name" value="Peroxidases_AS"/>
</dbReference>
<dbReference type="InterPro" id="IPR019793">
    <property type="entry name" value="Peroxidases_heam-ligand_BS"/>
</dbReference>
<dbReference type="InterPro" id="IPR033905">
    <property type="entry name" value="Secretory_peroxidase"/>
</dbReference>
<dbReference type="PANTHER" id="PTHR31388:SF141">
    <property type="entry name" value="PEROXIDASE 33-RELATED"/>
    <property type="match status" value="1"/>
</dbReference>
<dbReference type="PANTHER" id="PTHR31388">
    <property type="entry name" value="PEROXIDASE 72-RELATED"/>
    <property type="match status" value="1"/>
</dbReference>
<dbReference type="Pfam" id="PF00141">
    <property type="entry name" value="peroxidase"/>
    <property type="match status" value="1"/>
</dbReference>
<dbReference type="PRINTS" id="PR00458">
    <property type="entry name" value="PEROXIDASE"/>
</dbReference>
<dbReference type="PRINTS" id="PR00461">
    <property type="entry name" value="PLPEROXIDASE"/>
</dbReference>
<dbReference type="SUPFAM" id="SSF48113">
    <property type="entry name" value="Heme-dependent peroxidases"/>
    <property type="match status" value="1"/>
</dbReference>
<dbReference type="PROSITE" id="PS00435">
    <property type="entry name" value="PEROXIDASE_1"/>
    <property type="match status" value="1"/>
</dbReference>
<dbReference type="PROSITE" id="PS00436">
    <property type="entry name" value="PEROXIDASE_2"/>
    <property type="match status" value="1"/>
</dbReference>
<dbReference type="PROSITE" id="PS50873">
    <property type="entry name" value="PEROXIDASE_4"/>
    <property type="match status" value="1"/>
</dbReference>
<reference key="1">
    <citation type="journal article" date="1988" name="Eur. J. Biochem.">
        <title>Structure of the horseradish peroxidase isozyme C genes.</title>
        <authorList>
            <person name="Fujiyama K."/>
            <person name="Takemura H."/>
            <person name="Shibayama S."/>
            <person name="Kobayashi K."/>
            <person name="Choi J.K."/>
            <person name="Shinmyo A."/>
            <person name="Takano M."/>
            <person name="Yamada Y."/>
            <person name="Okada H."/>
        </authorList>
    </citation>
    <scope>NUCLEOTIDE SEQUENCE [GENOMIC DNA]</scope>
</reference>
<reference key="2">
    <citation type="journal article" date="1976" name="FEBS Lett.">
        <title>Covalent structure of the glycoprotein horseradish peroxidase (EC 1.11.1.7).</title>
        <authorList>
            <person name="Welinder K.G."/>
        </authorList>
    </citation>
    <scope>PROTEIN SEQUENCE OF 31-338</scope>
    <scope>PYROGLUTAMATE FORMATION AT GLN-31</scope>
</reference>
<reference key="3">
    <citation type="journal article" date="1997" name="Nat. Struct. Biol.">
        <title>Crystal structure of horseradish peroxidase C at 2.15-A resolution.</title>
        <authorList>
            <person name="Gajhede M."/>
            <person name="Schuller D.J."/>
            <person name="Henriksen A."/>
            <person name="Smith A.T."/>
            <person name="Poulos T.L."/>
        </authorList>
    </citation>
    <scope>X-RAY CRYSTALLOGRAPHY (2.15 ANGSTROMS)</scope>
</reference>
<reference key="4">
    <citation type="journal article" date="1998" name="Biochemistry">
        <title>Structural interactions between horseradish peroxidase C and the substrate benzhydroxamic acid determined by X-ray crystallography.</title>
        <authorList>
            <person name="Henriksen A."/>
            <person name="Schuller D.J."/>
            <person name="Meno K."/>
            <person name="Welinder K.G."/>
            <person name="Smith A.T."/>
            <person name="Gajhede M."/>
        </authorList>
    </citation>
    <scope>X-RAY CRYSTALLOGRAPHY (2.0 ANGSTROMS)</scope>
</reference>
<reference key="5">
    <citation type="submission" date="1998-12" db="PDB data bank">
        <authorList>
            <person name="Meno K."/>
            <person name="White C.G."/>
            <person name="Smith A.T."/>
            <person name="Gajhede M."/>
        </authorList>
    </citation>
    <scope>X-RAY CRYSTALLOGRAPHY (2.2 ANGSTROMS)</scope>
</reference>
<feature type="signal peptide" evidence="2">
    <location>
        <begin position="1"/>
        <end position="30"/>
    </location>
</feature>
<feature type="chain" id="PRO_0000023739" description="Peroxidase C1A" evidence="2">
    <location>
        <begin position="31"/>
        <end position="338"/>
    </location>
</feature>
<feature type="propeptide" id="PRO_0000023740">
    <location>
        <begin position="339"/>
        <end position="353"/>
    </location>
</feature>
<feature type="active site" description="Proton acceptor">
    <location>
        <position position="72"/>
    </location>
</feature>
<feature type="binding site">
    <location>
        <position position="73"/>
    </location>
    <ligand>
        <name>Ca(2+)</name>
        <dbReference type="ChEBI" id="CHEBI:29108"/>
        <label>1</label>
    </ligand>
</feature>
<feature type="binding site">
    <location>
        <position position="76"/>
    </location>
    <ligand>
        <name>Ca(2+)</name>
        <dbReference type="ChEBI" id="CHEBI:29108"/>
        <label>1</label>
    </ligand>
</feature>
<feature type="binding site">
    <location>
        <position position="78"/>
    </location>
    <ligand>
        <name>Ca(2+)</name>
        <dbReference type="ChEBI" id="CHEBI:29108"/>
        <label>1</label>
    </ligand>
</feature>
<feature type="binding site">
    <location>
        <position position="80"/>
    </location>
    <ligand>
        <name>Ca(2+)</name>
        <dbReference type="ChEBI" id="CHEBI:29108"/>
        <label>1</label>
    </ligand>
</feature>
<feature type="binding site">
    <location>
        <position position="82"/>
    </location>
    <ligand>
        <name>Ca(2+)</name>
        <dbReference type="ChEBI" id="CHEBI:29108"/>
        <label>1</label>
    </ligand>
</feature>
<feature type="binding site">
    <location>
        <position position="94"/>
    </location>
    <ligand>
        <name>Ca(2+)</name>
        <dbReference type="ChEBI" id="CHEBI:29108"/>
        <label>1</label>
    </ligand>
</feature>
<feature type="binding site">
    <location>
        <position position="169"/>
    </location>
    <ligand>
        <name>substrate</name>
    </ligand>
</feature>
<feature type="binding site" description="axial binding residue">
    <location>
        <position position="200"/>
    </location>
    <ligand>
        <name>heme b</name>
        <dbReference type="ChEBI" id="CHEBI:60344"/>
    </ligand>
    <ligandPart>
        <name>Fe</name>
        <dbReference type="ChEBI" id="CHEBI:18248"/>
    </ligandPart>
</feature>
<feature type="binding site">
    <location>
        <position position="201"/>
    </location>
    <ligand>
        <name>Ca(2+)</name>
        <dbReference type="ChEBI" id="CHEBI:29108"/>
        <label>2</label>
    </ligand>
</feature>
<feature type="binding site">
    <location>
        <position position="252"/>
    </location>
    <ligand>
        <name>Ca(2+)</name>
        <dbReference type="ChEBI" id="CHEBI:29108"/>
        <label>2</label>
    </ligand>
</feature>
<feature type="binding site">
    <location>
        <position position="255"/>
    </location>
    <ligand>
        <name>Ca(2+)</name>
        <dbReference type="ChEBI" id="CHEBI:29108"/>
        <label>2</label>
    </ligand>
</feature>
<feature type="binding site">
    <location>
        <position position="260"/>
    </location>
    <ligand>
        <name>Ca(2+)</name>
        <dbReference type="ChEBI" id="CHEBI:29108"/>
        <label>2</label>
    </ligand>
</feature>
<feature type="site" description="Transition state stabilizer">
    <location>
        <position position="68"/>
    </location>
</feature>
<feature type="modified residue" description="Pyrrolidone carboxylic acid" evidence="1 2">
    <location>
        <position position="31"/>
    </location>
</feature>
<feature type="glycosylation site" description="N-linked (GlcNAc...) asparagine" evidence="2">
    <location>
        <position position="43"/>
    </location>
</feature>
<feature type="glycosylation site" description="N-linked (GlcNAc...) asparagine" evidence="2">
    <location>
        <position position="87"/>
    </location>
</feature>
<feature type="glycosylation site" description="N-linked (GlcNAc...) asparagine">
    <location>
        <position position="188"/>
    </location>
</feature>
<feature type="glycosylation site" description="N-linked (GlcNAc...) asparagine">
    <location>
        <position position="216"/>
    </location>
</feature>
<feature type="glycosylation site" description="N-linked (GlcNAc...) asparagine">
    <location>
        <position position="228"/>
    </location>
</feature>
<feature type="glycosylation site" description="N-linked (GlcNAc...) asparagine">
    <location>
        <position position="244"/>
    </location>
</feature>
<feature type="glycosylation site" description="N-linked (GlcNAc...) asparagine">
    <location>
        <position position="285"/>
    </location>
</feature>
<feature type="glycosylation site" description="N-linked (GlcNAc...) asparagine">
    <location>
        <position position="298"/>
    </location>
</feature>
<feature type="disulfide bond" evidence="1 2">
    <location>
        <begin position="41"/>
        <end position="121"/>
    </location>
</feature>
<feature type="disulfide bond" evidence="1 2">
    <location>
        <begin position="74"/>
        <end position="79"/>
    </location>
</feature>
<feature type="disulfide bond">
    <location>
        <begin position="127"/>
        <end position="331"/>
    </location>
</feature>
<feature type="disulfide bond">
    <location>
        <begin position="207"/>
        <end position="239"/>
    </location>
</feature>
<feature type="turn" evidence="4">
    <location>
        <begin position="34"/>
        <end position="40"/>
    </location>
</feature>
<feature type="helix" evidence="4">
    <location>
        <begin position="44"/>
        <end position="58"/>
    </location>
</feature>
<feature type="helix" evidence="4">
    <location>
        <begin position="62"/>
        <end position="74"/>
    </location>
</feature>
<feature type="turn" evidence="4">
    <location>
        <begin position="75"/>
        <end position="77"/>
    </location>
</feature>
<feature type="strand" evidence="4">
    <location>
        <begin position="78"/>
        <end position="81"/>
    </location>
</feature>
<feature type="helix" evidence="4">
    <location>
        <begin position="82"/>
        <end position="84"/>
    </location>
</feature>
<feature type="strand" evidence="4">
    <location>
        <begin position="89"/>
        <end position="91"/>
    </location>
</feature>
<feature type="helix" evidence="4">
    <location>
        <begin position="94"/>
        <end position="96"/>
    </location>
</feature>
<feature type="turn" evidence="4">
    <location>
        <begin position="98"/>
        <end position="103"/>
    </location>
</feature>
<feature type="helix" evidence="4">
    <location>
        <begin position="107"/>
        <end position="120"/>
    </location>
</feature>
<feature type="turn" evidence="4">
    <location>
        <begin position="122"/>
        <end position="124"/>
    </location>
</feature>
<feature type="helix" evidence="4">
    <location>
        <begin position="127"/>
        <end position="141"/>
    </location>
</feature>
<feature type="helix" evidence="4">
    <location>
        <begin position="161"/>
        <end position="167"/>
    </location>
</feature>
<feature type="helix" evidence="4">
    <location>
        <begin position="175"/>
        <end position="184"/>
    </location>
</feature>
<feature type="helix" evidence="4">
    <location>
        <begin position="190"/>
        <end position="197"/>
    </location>
</feature>
<feature type="helix" evidence="4">
    <location>
        <begin position="198"/>
        <end position="201"/>
    </location>
</feature>
<feature type="strand" evidence="4">
    <location>
        <begin position="204"/>
        <end position="206"/>
    </location>
</feature>
<feature type="helix" evidence="4">
    <location>
        <begin position="207"/>
        <end position="210"/>
    </location>
</feature>
<feature type="helix" evidence="4">
    <location>
        <begin position="211"/>
        <end position="215"/>
    </location>
</feature>
<feature type="helix" evidence="4">
    <location>
        <begin position="217"/>
        <end position="219"/>
    </location>
</feature>
<feature type="strand" evidence="4">
    <location>
        <begin position="220"/>
        <end position="222"/>
    </location>
</feature>
<feature type="helix" evidence="4">
    <location>
        <begin position="229"/>
        <end position="238"/>
    </location>
</feature>
<feature type="strand" evidence="4">
    <location>
        <begin position="248"/>
        <end position="251"/>
    </location>
</feature>
<feature type="strand" evidence="5">
    <location>
        <begin position="253"/>
        <end position="255"/>
    </location>
</feature>
<feature type="helix" evidence="4">
    <location>
        <begin position="262"/>
        <end position="268"/>
    </location>
</feature>
<feature type="helix" evidence="4">
    <location>
        <begin position="275"/>
        <end position="282"/>
    </location>
</feature>
<feature type="turn" evidence="4">
    <location>
        <begin position="284"/>
        <end position="288"/>
    </location>
</feature>
<feature type="helix" evidence="4">
    <location>
        <begin position="289"/>
        <end position="298"/>
    </location>
</feature>
<feature type="helix" evidence="4">
    <location>
        <begin position="300"/>
        <end position="314"/>
    </location>
</feature>
<feature type="strand" evidence="4">
    <location>
        <begin position="324"/>
        <end position="326"/>
    </location>
</feature>
<accession>P00433</accession>